<evidence type="ECO:0000250" key="1"/>
<evidence type="ECO:0000305" key="2"/>
<keyword id="KW-0963">Cytoplasm</keyword>
<keyword id="KW-0238">DNA-binding</keyword>
<keyword id="KW-0408">Iron</keyword>
<keyword id="KW-0479">Metal-binding</keyword>
<keyword id="KW-1185">Reference proteome</keyword>
<keyword id="KW-0678">Repressor</keyword>
<keyword id="KW-0804">Transcription</keyword>
<keyword id="KW-0805">Transcription regulation</keyword>
<keyword id="KW-0862">Zinc</keyword>
<dbReference type="EMBL" id="AE005174">
    <property type="protein sequence ID" value="AAG55006.1"/>
    <property type="molecule type" value="Genomic_DNA"/>
</dbReference>
<dbReference type="EMBL" id="BA000007">
    <property type="protein sequence ID" value="BAB34137.1"/>
    <property type="molecule type" value="Genomic_DNA"/>
</dbReference>
<dbReference type="PIR" id="B85568">
    <property type="entry name" value="B85568"/>
</dbReference>
<dbReference type="PIR" id="B90718">
    <property type="entry name" value="B90718"/>
</dbReference>
<dbReference type="RefSeq" id="NP_308741.1">
    <property type="nucleotide sequence ID" value="NC_002695.1"/>
</dbReference>
<dbReference type="RefSeq" id="WP_000131702.1">
    <property type="nucleotide sequence ID" value="NZ_VOAI01000012.1"/>
</dbReference>
<dbReference type="BMRB" id="P0A9B1"/>
<dbReference type="SMR" id="P0A9B1"/>
<dbReference type="STRING" id="155864.Z0831"/>
<dbReference type="GeneID" id="917083"/>
<dbReference type="GeneID" id="93776802"/>
<dbReference type="KEGG" id="ece:Z0831"/>
<dbReference type="KEGG" id="ecs:ECs_0714"/>
<dbReference type="PATRIC" id="fig|386585.9.peg.830"/>
<dbReference type="eggNOG" id="COG0735">
    <property type="taxonomic scope" value="Bacteria"/>
</dbReference>
<dbReference type="HOGENOM" id="CLU_096072_3_3_6"/>
<dbReference type="OMA" id="HDHVILT"/>
<dbReference type="Proteomes" id="UP000000558">
    <property type="component" value="Chromosome"/>
</dbReference>
<dbReference type="Proteomes" id="UP000002519">
    <property type="component" value="Chromosome"/>
</dbReference>
<dbReference type="GO" id="GO:0005829">
    <property type="term" value="C:cytosol"/>
    <property type="evidence" value="ECO:0007669"/>
    <property type="project" value="TreeGrafter"/>
</dbReference>
<dbReference type="GO" id="GO:0003700">
    <property type="term" value="F:DNA-binding transcription factor activity"/>
    <property type="evidence" value="ECO:0007669"/>
    <property type="project" value="InterPro"/>
</dbReference>
<dbReference type="GO" id="GO:0000976">
    <property type="term" value="F:transcription cis-regulatory region binding"/>
    <property type="evidence" value="ECO:0007669"/>
    <property type="project" value="TreeGrafter"/>
</dbReference>
<dbReference type="GO" id="GO:0008270">
    <property type="term" value="F:zinc ion binding"/>
    <property type="evidence" value="ECO:0007669"/>
    <property type="project" value="TreeGrafter"/>
</dbReference>
<dbReference type="GO" id="GO:0045892">
    <property type="term" value="P:negative regulation of DNA-templated transcription"/>
    <property type="evidence" value="ECO:0007669"/>
    <property type="project" value="TreeGrafter"/>
</dbReference>
<dbReference type="GO" id="GO:1900705">
    <property type="term" value="P:negative regulation of siderophore biosynthetic process"/>
    <property type="evidence" value="ECO:0007669"/>
    <property type="project" value="TreeGrafter"/>
</dbReference>
<dbReference type="CDD" id="cd07153">
    <property type="entry name" value="Fur_like"/>
    <property type="match status" value="1"/>
</dbReference>
<dbReference type="FunFam" id="1.10.10.10:FF:000007">
    <property type="entry name" value="Ferric uptake regulation protein"/>
    <property type="match status" value="1"/>
</dbReference>
<dbReference type="FunFam" id="3.30.1490.190:FF:000001">
    <property type="entry name" value="Ferric uptake regulation protein"/>
    <property type="match status" value="1"/>
</dbReference>
<dbReference type="Gene3D" id="3.30.1490.190">
    <property type="match status" value="1"/>
</dbReference>
<dbReference type="Gene3D" id="1.10.10.10">
    <property type="entry name" value="Winged helix-like DNA-binding domain superfamily/Winged helix DNA-binding domain"/>
    <property type="match status" value="1"/>
</dbReference>
<dbReference type="InterPro" id="IPR002481">
    <property type="entry name" value="FUR"/>
</dbReference>
<dbReference type="InterPro" id="IPR043135">
    <property type="entry name" value="Fur_C"/>
</dbReference>
<dbReference type="InterPro" id="IPR036388">
    <property type="entry name" value="WH-like_DNA-bd_sf"/>
</dbReference>
<dbReference type="InterPro" id="IPR036390">
    <property type="entry name" value="WH_DNA-bd_sf"/>
</dbReference>
<dbReference type="NCBIfam" id="NF006999">
    <property type="entry name" value="PRK09462.1"/>
    <property type="match status" value="1"/>
</dbReference>
<dbReference type="PANTHER" id="PTHR33202:SF2">
    <property type="entry name" value="FERRIC UPTAKE REGULATION PROTEIN"/>
    <property type="match status" value="1"/>
</dbReference>
<dbReference type="PANTHER" id="PTHR33202">
    <property type="entry name" value="ZINC UPTAKE REGULATION PROTEIN"/>
    <property type="match status" value="1"/>
</dbReference>
<dbReference type="Pfam" id="PF01475">
    <property type="entry name" value="FUR"/>
    <property type="match status" value="1"/>
</dbReference>
<dbReference type="SUPFAM" id="SSF46785">
    <property type="entry name" value="Winged helix' DNA-binding domain"/>
    <property type="match status" value="1"/>
</dbReference>
<comment type="function">
    <text evidence="1">Acts as a global negative controlling element, employing Fe(2+) as a cofactor to bind the operator of the repressed genes. Regulates the expression of several outer-membrane proteins including the iron transport operon (By similarity).</text>
</comment>
<comment type="subunit">
    <text evidence="1">Homodimer.</text>
</comment>
<comment type="subcellular location">
    <subcellularLocation>
        <location evidence="1">Cytoplasm</location>
    </subcellularLocation>
</comment>
<comment type="similarity">
    <text evidence="2">Belongs to the Fur family.</text>
</comment>
<name>FUR_ECO57</name>
<proteinExistence type="inferred from homology"/>
<protein>
    <recommendedName>
        <fullName>Ferric uptake regulation protein</fullName>
        <shortName>Ferric uptake regulator</shortName>
    </recommendedName>
</protein>
<sequence>MTDNNTALKKAGLKVTLPRLKILEVLQEPDNHHVSAEDLYKRLIDMGEEIGLATVYRVLNQFDDAGIVTRHNFEGGKSVFELTQQHHHDHLICLDCGKVIEFSDDSIEARQREIAAKHGIRLTNHSLYLYGHCAEGDCREDEHAHEGK</sequence>
<accession>P0A9B1</accession>
<accession>P06975</accession>
<reference key="1">
    <citation type="journal article" date="2001" name="Nature">
        <title>Genome sequence of enterohaemorrhagic Escherichia coli O157:H7.</title>
        <authorList>
            <person name="Perna N.T."/>
            <person name="Plunkett G. III"/>
            <person name="Burland V."/>
            <person name="Mau B."/>
            <person name="Glasner J.D."/>
            <person name="Rose D.J."/>
            <person name="Mayhew G.F."/>
            <person name="Evans P.S."/>
            <person name="Gregor J."/>
            <person name="Kirkpatrick H.A."/>
            <person name="Posfai G."/>
            <person name="Hackett J."/>
            <person name="Klink S."/>
            <person name="Boutin A."/>
            <person name="Shao Y."/>
            <person name="Miller L."/>
            <person name="Grotbeck E.J."/>
            <person name="Davis N.W."/>
            <person name="Lim A."/>
            <person name="Dimalanta E.T."/>
            <person name="Potamousis K."/>
            <person name="Apodaca J."/>
            <person name="Anantharaman T.S."/>
            <person name="Lin J."/>
            <person name="Yen G."/>
            <person name="Schwartz D.C."/>
            <person name="Welch R.A."/>
            <person name="Blattner F.R."/>
        </authorList>
    </citation>
    <scope>NUCLEOTIDE SEQUENCE [LARGE SCALE GENOMIC DNA]</scope>
    <source>
        <strain>O157:H7 / EDL933 / ATCC 700927 / EHEC</strain>
    </source>
</reference>
<reference key="2">
    <citation type="journal article" date="2001" name="DNA Res.">
        <title>Complete genome sequence of enterohemorrhagic Escherichia coli O157:H7 and genomic comparison with a laboratory strain K-12.</title>
        <authorList>
            <person name="Hayashi T."/>
            <person name="Makino K."/>
            <person name="Ohnishi M."/>
            <person name="Kurokawa K."/>
            <person name="Ishii K."/>
            <person name="Yokoyama K."/>
            <person name="Han C.-G."/>
            <person name="Ohtsubo E."/>
            <person name="Nakayama K."/>
            <person name="Murata T."/>
            <person name="Tanaka M."/>
            <person name="Tobe T."/>
            <person name="Iida T."/>
            <person name="Takami H."/>
            <person name="Honda T."/>
            <person name="Sasakawa C."/>
            <person name="Ogasawara N."/>
            <person name="Yasunaga T."/>
            <person name="Kuhara S."/>
            <person name="Shiba T."/>
            <person name="Hattori M."/>
            <person name="Shinagawa H."/>
        </authorList>
    </citation>
    <scope>NUCLEOTIDE SEQUENCE [LARGE SCALE GENOMIC DNA]</scope>
    <source>
        <strain>O157:H7 / Sakai / RIMD 0509952 / EHEC</strain>
    </source>
</reference>
<feature type="chain" id="PRO_0000095551" description="Ferric uptake regulation protein">
    <location>
        <begin position="1"/>
        <end position="148"/>
    </location>
</feature>
<feature type="region of interest" description="DNA-binding" evidence="1">
    <location>
        <begin position="1"/>
        <end position="84"/>
    </location>
</feature>
<feature type="region of interest" description="Dimerization" evidence="1">
    <location>
        <begin position="85"/>
        <end position="148"/>
    </location>
</feature>
<feature type="binding site" evidence="1">
    <location>
        <position position="33"/>
    </location>
    <ligand>
        <name>Zn(2+)</name>
        <dbReference type="ChEBI" id="CHEBI:29105"/>
    </ligand>
</feature>
<feature type="binding site" evidence="1">
    <location>
        <position position="81"/>
    </location>
    <ligand>
        <name>Zn(2+)</name>
        <dbReference type="ChEBI" id="CHEBI:29105"/>
    </ligand>
</feature>
<feature type="binding site" evidence="1">
    <location>
        <position position="87"/>
    </location>
    <ligand>
        <name>Fe cation</name>
        <dbReference type="ChEBI" id="CHEBI:24875"/>
    </ligand>
</feature>
<feature type="binding site" evidence="1">
    <location>
        <position position="89"/>
    </location>
    <ligand>
        <name>Fe cation</name>
        <dbReference type="ChEBI" id="CHEBI:24875"/>
    </ligand>
</feature>
<feature type="binding site" evidence="1">
    <location>
        <position position="90"/>
    </location>
    <ligand>
        <name>Zn(2+)</name>
        <dbReference type="ChEBI" id="CHEBI:29105"/>
    </ligand>
</feature>
<feature type="binding site" evidence="1">
    <location>
        <position position="93"/>
    </location>
    <ligand>
        <name>Zn(2+)</name>
        <dbReference type="ChEBI" id="CHEBI:29105"/>
    </ligand>
</feature>
<feature type="binding site" evidence="1">
    <location>
        <position position="96"/>
    </location>
    <ligand>
        <name>Zn(2+)</name>
        <dbReference type="ChEBI" id="CHEBI:29105"/>
    </ligand>
</feature>
<feature type="binding site" evidence="1">
    <location>
        <position position="101"/>
    </location>
    <ligand>
        <name>Zn(2+)</name>
        <dbReference type="ChEBI" id="CHEBI:29105"/>
    </ligand>
</feature>
<feature type="binding site" evidence="1">
    <location>
        <position position="108"/>
    </location>
    <ligand>
        <name>Fe cation</name>
        <dbReference type="ChEBI" id="CHEBI:24875"/>
    </ligand>
</feature>
<feature type="binding site" evidence="1">
    <location>
        <position position="125"/>
    </location>
    <ligand>
        <name>Fe cation</name>
        <dbReference type="ChEBI" id="CHEBI:24875"/>
    </ligand>
</feature>
<organism>
    <name type="scientific">Escherichia coli O157:H7</name>
    <dbReference type="NCBI Taxonomy" id="83334"/>
    <lineage>
        <taxon>Bacteria</taxon>
        <taxon>Pseudomonadati</taxon>
        <taxon>Pseudomonadota</taxon>
        <taxon>Gammaproteobacteria</taxon>
        <taxon>Enterobacterales</taxon>
        <taxon>Enterobacteriaceae</taxon>
        <taxon>Escherichia</taxon>
    </lineage>
</organism>
<gene>
    <name type="primary">fur</name>
    <name type="ordered locus">Z0831</name>
    <name type="ordered locus">ECs0714</name>
</gene>